<organism>
    <name type="scientific">Aeropyrum pernix (strain ATCC 700893 / DSM 11879 / JCM 9820 / NBRC 100138 / K1)</name>
    <dbReference type="NCBI Taxonomy" id="272557"/>
    <lineage>
        <taxon>Archaea</taxon>
        <taxon>Thermoproteota</taxon>
        <taxon>Thermoprotei</taxon>
        <taxon>Desulfurococcales</taxon>
        <taxon>Desulfurococcaceae</taxon>
        <taxon>Aeropyrum</taxon>
    </lineage>
</organism>
<keyword id="KW-1185">Reference proteome</keyword>
<keyword id="KW-0687">Ribonucleoprotein</keyword>
<keyword id="KW-0689">Ribosomal protein</keyword>
<name>RS28_AERPE</name>
<comment type="similarity">
    <text evidence="1">Belongs to the eukaryotic ribosomal protein eS28 family.</text>
</comment>
<evidence type="ECO:0000305" key="1"/>
<gene>
    <name type="primary">rps28e</name>
    <name type="ordered locus">APE_2379b.1</name>
    <name type="ORF">APES071</name>
</gene>
<protein>
    <recommendedName>
        <fullName evidence="1">Small ribosomal subunit protein eS28</fullName>
    </recommendedName>
    <alternativeName>
        <fullName>30S ribosomal protein S28e</fullName>
    </alternativeName>
</protein>
<dbReference type="EMBL" id="BA000002">
    <property type="protein sequence ID" value="BAA81394.2"/>
    <property type="molecule type" value="Genomic_DNA"/>
</dbReference>
<dbReference type="PIR" id="B72467">
    <property type="entry name" value="B72467"/>
</dbReference>
<dbReference type="SMR" id="Q9Y9A6"/>
<dbReference type="STRING" id="272557.APE_2379b.1"/>
<dbReference type="EnsemblBacteria" id="BAA81394">
    <property type="protein sequence ID" value="BAA81394"/>
    <property type="gene ID" value="APE_2379b.1"/>
</dbReference>
<dbReference type="KEGG" id="ape:APE_2379b.1"/>
<dbReference type="PATRIC" id="fig|272557.25.peg.1588"/>
<dbReference type="eggNOG" id="arCOG04314">
    <property type="taxonomic scope" value="Archaea"/>
</dbReference>
<dbReference type="Proteomes" id="UP000002518">
    <property type="component" value="Chromosome"/>
</dbReference>
<dbReference type="GO" id="GO:0022627">
    <property type="term" value="C:cytosolic small ribosomal subunit"/>
    <property type="evidence" value="ECO:0007669"/>
    <property type="project" value="TreeGrafter"/>
</dbReference>
<dbReference type="GO" id="GO:0003735">
    <property type="term" value="F:structural constituent of ribosome"/>
    <property type="evidence" value="ECO:0007669"/>
    <property type="project" value="InterPro"/>
</dbReference>
<dbReference type="GO" id="GO:0030490">
    <property type="term" value="P:maturation of SSU-rRNA"/>
    <property type="evidence" value="ECO:0007669"/>
    <property type="project" value="TreeGrafter"/>
</dbReference>
<dbReference type="GO" id="GO:0000028">
    <property type="term" value="P:ribosomal small subunit assembly"/>
    <property type="evidence" value="ECO:0007669"/>
    <property type="project" value="TreeGrafter"/>
</dbReference>
<dbReference type="GO" id="GO:0006412">
    <property type="term" value="P:translation"/>
    <property type="evidence" value="ECO:0007669"/>
    <property type="project" value="UniProtKB-UniRule"/>
</dbReference>
<dbReference type="CDD" id="cd04457">
    <property type="entry name" value="S1_S28E"/>
    <property type="match status" value="1"/>
</dbReference>
<dbReference type="FunFam" id="2.40.50.140:FF:000145">
    <property type="entry name" value="30S ribosomal protein S28e"/>
    <property type="match status" value="1"/>
</dbReference>
<dbReference type="Gene3D" id="2.40.50.140">
    <property type="entry name" value="Nucleic acid-binding proteins"/>
    <property type="match status" value="1"/>
</dbReference>
<dbReference type="HAMAP" id="MF_00292">
    <property type="entry name" value="Ribosomal_eS28"/>
    <property type="match status" value="1"/>
</dbReference>
<dbReference type="InterPro" id="IPR012340">
    <property type="entry name" value="NA-bd_OB-fold"/>
</dbReference>
<dbReference type="InterPro" id="IPR000289">
    <property type="entry name" value="Ribosomal_eS28"/>
</dbReference>
<dbReference type="InterPro" id="IPR028626">
    <property type="entry name" value="Ribosomal_eS28_CS"/>
</dbReference>
<dbReference type="NCBIfam" id="NF003080">
    <property type="entry name" value="PRK04007.1"/>
    <property type="match status" value="1"/>
</dbReference>
<dbReference type="PANTHER" id="PTHR10769">
    <property type="entry name" value="40S RIBOSOMAL PROTEIN S28"/>
    <property type="match status" value="1"/>
</dbReference>
<dbReference type="PANTHER" id="PTHR10769:SF3">
    <property type="entry name" value="SMALL RIBOSOMAL SUBUNIT PROTEIN ES28"/>
    <property type="match status" value="1"/>
</dbReference>
<dbReference type="Pfam" id="PF01200">
    <property type="entry name" value="Ribosomal_S28e"/>
    <property type="match status" value="1"/>
</dbReference>
<dbReference type="SUPFAM" id="SSF50249">
    <property type="entry name" value="Nucleic acid-binding proteins"/>
    <property type="match status" value="1"/>
</dbReference>
<dbReference type="PROSITE" id="PS00961">
    <property type="entry name" value="RIBOSOMAL_S28E"/>
    <property type="match status" value="1"/>
</dbReference>
<reference key="1">
    <citation type="journal article" date="1999" name="DNA Res.">
        <title>Complete genome sequence of an aerobic hyper-thermophilic crenarchaeon, Aeropyrum pernix K1.</title>
        <authorList>
            <person name="Kawarabayasi Y."/>
            <person name="Hino Y."/>
            <person name="Horikawa H."/>
            <person name="Yamazaki S."/>
            <person name="Haikawa Y."/>
            <person name="Jin-no K."/>
            <person name="Takahashi M."/>
            <person name="Sekine M."/>
            <person name="Baba S."/>
            <person name="Ankai A."/>
            <person name="Kosugi H."/>
            <person name="Hosoyama A."/>
            <person name="Fukui S."/>
            <person name="Nagai Y."/>
            <person name="Nishijima K."/>
            <person name="Nakazawa H."/>
            <person name="Takamiya M."/>
            <person name="Masuda S."/>
            <person name="Funahashi T."/>
            <person name="Tanaka T."/>
            <person name="Kudoh Y."/>
            <person name="Yamazaki J."/>
            <person name="Kushida N."/>
            <person name="Oguchi A."/>
            <person name="Aoki K."/>
            <person name="Kubota K."/>
            <person name="Nakamura Y."/>
            <person name="Nomura N."/>
            <person name="Sako Y."/>
            <person name="Kikuchi H."/>
        </authorList>
    </citation>
    <scope>NUCLEOTIDE SEQUENCE [LARGE SCALE GENOMIC DNA]</scope>
    <source>
        <strain>ATCC 700893 / DSM 11879 / JCM 9820 / NBRC 100138 / K1</strain>
    </source>
</reference>
<feature type="chain" id="PRO_0000136844" description="Small ribosomal subunit protein eS28">
    <location>
        <begin position="1"/>
        <end position="82"/>
    </location>
</feature>
<accession>Q9Y9A6</accession>
<proteinExistence type="inferred from homology"/>
<sequence length="82" mass="9199">MSAREGEKRSGVIEEFGFPAEVIQIIGRTGVTGEVTQVRVRILEGRDKGRILTRNVIGPVRIGDILILRETEREARKLSGRR</sequence>